<protein>
    <recommendedName>
        <fullName evidence="1">4-hydroxy-tetrahydrodipicolinate reductase</fullName>
        <shortName evidence="1">HTPA reductase</shortName>
        <ecNumber evidence="1">1.17.1.8</ecNumber>
    </recommendedName>
</protein>
<feature type="chain" id="PRO_1000118849" description="4-hydroxy-tetrahydrodipicolinate reductase">
    <location>
        <begin position="1"/>
        <end position="248"/>
    </location>
</feature>
<feature type="active site" description="Proton donor/acceptor" evidence="1">
    <location>
        <position position="134"/>
    </location>
</feature>
<feature type="active site" description="Proton donor" evidence="1">
    <location>
        <position position="138"/>
    </location>
</feature>
<feature type="binding site" evidence="1">
    <location>
        <begin position="9"/>
        <end position="14"/>
    </location>
    <ligand>
        <name>NAD(+)</name>
        <dbReference type="ChEBI" id="CHEBI:57540"/>
    </ligand>
</feature>
<feature type="binding site" evidence="1">
    <location>
        <begin position="77"/>
        <end position="79"/>
    </location>
    <ligand>
        <name>NAD(+)</name>
        <dbReference type="ChEBI" id="CHEBI:57540"/>
    </ligand>
</feature>
<feature type="binding site" evidence="1">
    <location>
        <begin position="104"/>
        <end position="107"/>
    </location>
    <ligand>
        <name>NAD(+)</name>
        <dbReference type="ChEBI" id="CHEBI:57540"/>
    </ligand>
</feature>
<feature type="binding site" evidence="1">
    <location>
        <position position="135"/>
    </location>
    <ligand>
        <name>(S)-2,3,4,5-tetrahydrodipicolinate</name>
        <dbReference type="ChEBI" id="CHEBI:16845"/>
    </ligand>
</feature>
<feature type="binding site" evidence="1">
    <location>
        <begin position="144"/>
        <end position="145"/>
    </location>
    <ligand>
        <name>(S)-2,3,4,5-tetrahydrodipicolinate</name>
        <dbReference type="ChEBI" id="CHEBI:16845"/>
    </ligand>
</feature>
<evidence type="ECO:0000255" key="1">
    <source>
        <dbReference type="HAMAP-Rule" id="MF_00102"/>
    </source>
</evidence>
<evidence type="ECO:0000305" key="2"/>
<sequence>MTIKVGVLGAKGRVGQAIVEGVNAAEDLELVASIDRGTPLEKLVESGAEVAVDFTQPASVMDNLEFCIAHGIHAVVGTTGFDSERLAKVEGWTQKEDAGNVLIAPNFAISAVLTMVFAAQAAKFFDSAEVVEYHHPNKLDAPSGTAVHTAQGIANARQEAGLDAMPDKTEQSLDGARGADVDGVHVHAVRMQGMVAHEEVIFGTQGQSLTIRQDSYDRSSFTPGVLLGVREIASHPGLTVGLEKYLGL</sequence>
<organism>
    <name type="scientific">Corynebacterium aurimucosum (strain ATCC 700975 / DSM 44827 / CIP 107346 / CN-1)</name>
    <name type="common">Corynebacterium nigricans</name>
    <dbReference type="NCBI Taxonomy" id="548476"/>
    <lineage>
        <taxon>Bacteria</taxon>
        <taxon>Bacillati</taxon>
        <taxon>Actinomycetota</taxon>
        <taxon>Actinomycetes</taxon>
        <taxon>Mycobacteriales</taxon>
        <taxon>Corynebacteriaceae</taxon>
        <taxon>Corynebacterium</taxon>
    </lineage>
</organism>
<dbReference type="EC" id="1.17.1.8" evidence="1"/>
<dbReference type="EMBL" id="CP001601">
    <property type="protein sequence ID" value="ACP33110.1"/>
    <property type="molecule type" value="Genomic_DNA"/>
</dbReference>
<dbReference type="RefSeq" id="WP_010190307.1">
    <property type="nucleotide sequence ID" value="NC_012590.1"/>
</dbReference>
<dbReference type="SMR" id="C3PH06"/>
<dbReference type="STRING" id="548476.cauri_1517"/>
<dbReference type="GeneID" id="31924146"/>
<dbReference type="KEGG" id="car:cauri_1517"/>
<dbReference type="eggNOG" id="COG0289">
    <property type="taxonomic scope" value="Bacteria"/>
</dbReference>
<dbReference type="HOGENOM" id="CLU_047479_0_1_11"/>
<dbReference type="OrthoDB" id="9790352at2"/>
<dbReference type="UniPathway" id="UPA00034">
    <property type="reaction ID" value="UER00018"/>
</dbReference>
<dbReference type="Proteomes" id="UP000002077">
    <property type="component" value="Chromosome"/>
</dbReference>
<dbReference type="GO" id="GO:0005829">
    <property type="term" value="C:cytosol"/>
    <property type="evidence" value="ECO:0007669"/>
    <property type="project" value="TreeGrafter"/>
</dbReference>
<dbReference type="GO" id="GO:0008839">
    <property type="term" value="F:4-hydroxy-tetrahydrodipicolinate reductase"/>
    <property type="evidence" value="ECO:0007669"/>
    <property type="project" value="UniProtKB-EC"/>
</dbReference>
<dbReference type="GO" id="GO:0051287">
    <property type="term" value="F:NAD binding"/>
    <property type="evidence" value="ECO:0007669"/>
    <property type="project" value="UniProtKB-UniRule"/>
</dbReference>
<dbReference type="GO" id="GO:0050661">
    <property type="term" value="F:NADP binding"/>
    <property type="evidence" value="ECO:0007669"/>
    <property type="project" value="UniProtKB-UniRule"/>
</dbReference>
<dbReference type="GO" id="GO:0016726">
    <property type="term" value="F:oxidoreductase activity, acting on CH or CH2 groups, NAD or NADP as acceptor"/>
    <property type="evidence" value="ECO:0007669"/>
    <property type="project" value="UniProtKB-UniRule"/>
</dbReference>
<dbReference type="GO" id="GO:0019877">
    <property type="term" value="P:diaminopimelate biosynthetic process"/>
    <property type="evidence" value="ECO:0007669"/>
    <property type="project" value="UniProtKB-UniRule"/>
</dbReference>
<dbReference type="GO" id="GO:0009089">
    <property type="term" value="P:lysine biosynthetic process via diaminopimelate"/>
    <property type="evidence" value="ECO:0007669"/>
    <property type="project" value="UniProtKB-UniRule"/>
</dbReference>
<dbReference type="CDD" id="cd02274">
    <property type="entry name" value="DHDPR_N"/>
    <property type="match status" value="1"/>
</dbReference>
<dbReference type="FunFam" id="3.30.360.10:FF:000009">
    <property type="entry name" value="4-hydroxy-tetrahydrodipicolinate reductase"/>
    <property type="match status" value="1"/>
</dbReference>
<dbReference type="Gene3D" id="3.30.360.10">
    <property type="entry name" value="Dihydrodipicolinate Reductase, domain 2"/>
    <property type="match status" value="1"/>
</dbReference>
<dbReference type="Gene3D" id="3.40.50.720">
    <property type="entry name" value="NAD(P)-binding Rossmann-like Domain"/>
    <property type="match status" value="1"/>
</dbReference>
<dbReference type="HAMAP" id="MF_00102">
    <property type="entry name" value="DapB"/>
    <property type="match status" value="1"/>
</dbReference>
<dbReference type="InterPro" id="IPR022663">
    <property type="entry name" value="DapB_C"/>
</dbReference>
<dbReference type="InterPro" id="IPR000846">
    <property type="entry name" value="DapB_N"/>
</dbReference>
<dbReference type="InterPro" id="IPR022664">
    <property type="entry name" value="DapB_N_CS"/>
</dbReference>
<dbReference type="InterPro" id="IPR023940">
    <property type="entry name" value="DHDPR_bac"/>
</dbReference>
<dbReference type="InterPro" id="IPR036291">
    <property type="entry name" value="NAD(P)-bd_dom_sf"/>
</dbReference>
<dbReference type="NCBIfam" id="TIGR00036">
    <property type="entry name" value="dapB"/>
    <property type="match status" value="1"/>
</dbReference>
<dbReference type="PANTHER" id="PTHR20836:SF0">
    <property type="entry name" value="4-HYDROXY-TETRAHYDRODIPICOLINATE REDUCTASE 1, CHLOROPLASTIC-RELATED"/>
    <property type="match status" value="1"/>
</dbReference>
<dbReference type="PANTHER" id="PTHR20836">
    <property type="entry name" value="DIHYDRODIPICOLINATE REDUCTASE"/>
    <property type="match status" value="1"/>
</dbReference>
<dbReference type="Pfam" id="PF05173">
    <property type="entry name" value="DapB_C"/>
    <property type="match status" value="1"/>
</dbReference>
<dbReference type="Pfam" id="PF01113">
    <property type="entry name" value="DapB_N"/>
    <property type="match status" value="1"/>
</dbReference>
<dbReference type="PIRSF" id="PIRSF000161">
    <property type="entry name" value="DHPR"/>
    <property type="match status" value="1"/>
</dbReference>
<dbReference type="SUPFAM" id="SSF55347">
    <property type="entry name" value="Glyceraldehyde-3-phosphate dehydrogenase-like, C-terminal domain"/>
    <property type="match status" value="1"/>
</dbReference>
<dbReference type="SUPFAM" id="SSF51735">
    <property type="entry name" value="NAD(P)-binding Rossmann-fold domains"/>
    <property type="match status" value="1"/>
</dbReference>
<dbReference type="PROSITE" id="PS01298">
    <property type="entry name" value="DAPB"/>
    <property type="match status" value="1"/>
</dbReference>
<proteinExistence type="inferred from homology"/>
<accession>C3PH06</accession>
<name>DAPB_CORA7</name>
<comment type="function">
    <text evidence="1">Catalyzes the conversion of 4-hydroxy-tetrahydrodipicolinate (HTPA) to tetrahydrodipicolinate.</text>
</comment>
<comment type="catalytic activity">
    <reaction evidence="1">
        <text>(S)-2,3,4,5-tetrahydrodipicolinate + NAD(+) + H2O = (2S,4S)-4-hydroxy-2,3,4,5-tetrahydrodipicolinate + NADH + H(+)</text>
        <dbReference type="Rhea" id="RHEA:35323"/>
        <dbReference type="ChEBI" id="CHEBI:15377"/>
        <dbReference type="ChEBI" id="CHEBI:15378"/>
        <dbReference type="ChEBI" id="CHEBI:16845"/>
        <dbReference type="ChEBI" id="CHEBI:57540"/>
        <dbReference type="ChEBI" id="CHEBI:57945"/>
        <dbReference type="ChEBI" id="CHEBI:67139"/>
        <dbReference type="EC" id="1.17.1.8"/>
    </reaction>
</comment>
<comment type="catalytic activity">
    <reaction evidence="1">
        <text>(S)-2,3,4,5-tetrahydrodipicolinate + NADP(+) + H2O = (2S,4S)-4-hydroxy-2,3,4,5-tetrahydrodipicolinate + NADPH + H(+)</text>
        <dbReference type="Rhea" id="RHEA:35331"/>
        <dbReference type="ChEBI" id="CHEBI:15377"/>
        <dbReference type="ChEBI" id="CHEBI:15378"/>
        <dbReference type="ChEBI" id="CHEBI:16845"/>
        <dbReference type="ChEBI" id="CHEBI:57783"/>
        <dbReference type="ChEBI" id="CHEBI:58349"/>
        <dbReference type="ChEBI" id="CHEBI:67139"/>
        <dbReference type="EC" id="1.17.1.8"/>
    </reaction>
</comment>
<comment type="pathway">
    <text evidence="1">Amino-acid biosynthesis; L-lysine biosynthesis via DAP pathway; (S)-tetrahydrodipicolinate from L-aspartate: step 4/4.</text>
</comment>
<comment type="subcellular location">
    <subcellularLocation>
        <location evidence="1">Cytoplasm</location>
    </subcellularLocation>
</comment>
<comment type="similarity">
    <text evidence="1">Belongs to the DapB family.</text>
</comment>
<comment type="caution">
    <text evidence="2">Was originally thought to be a dihydrodipicolinate reductase (DHDPR), catalyzing the conversion of dihydrodipicolinate to tetrahydrodipicolinate. However, it was shown in E.coli that the substrate of the enzymatic reaction is not dihydrodipicolinate (DHDP) but in fact (2S,4S)-4-hydroxy-2,3,4,5-tetrahydrodipicolinic acid (HTPA), the product released by the DapA-catalyzed reaction.</text>
</comment>
<keyword id="KW-0028">Amino-acid biosynthesis</keyword>
<keyword id="KW-0963">Cytoplasm</keyword>
<keyword id="KW-0220">Diaminopimelate biosynthesis</keyword>
<keyword id="KW-0457">Lysine biosynthesis</keyword>
<keyword id="KW-0520">NAD</keyword>
<keyword id="KW-0521">NADP</keyword>
<keyword id="KW-0560">Oxidoreductase</keyword>
<keyword id="KW-1185">Reference proteome</keyword>
<reference key="1">
    <citation type="journal article" date="2010" name="BMC Genomics">
        <title>Complete genome sequence and lifestyle of black-pigmented Corynebacterium aurimucosum ATCC 700975 (formerly C. nigricans CN-1) isolated from a vaginal swab of a woman with spontaneous abortion.</title>
        <authorList>
            <person name="Trost E."/>
            <person name="Gotker S."/>
            <person name="Schneider J."/>
            <person name="Schneiker-Bekel S."/>
            <person name="Szczepanowski R."/>
            <person name="Tilker A."/>
            <person name="Viehoever P."/>
            <person name="Arnold W."/>
            <person name="Bekel T."/>
            <person name="Blom J."/>
            <person name="Gartemann K.H."/>
            <person name="Linke B."/>
            <person name="Goesmann A."/>
            <person name="Puhler A."/>
            <person name="Shukla S.K."/>
            <person name="Tauch A."/>
        </authorList>
    </citation>
    <scope>NUCLEOTIDE SEQUENCE [LARGE SCALE GENOMIC DNA]</scope>
    <source>
        <strain>ATCC 700975 / DSM 44827 / CIP 107346 / CN-1</strain>
    </source>
</reference>
<gene>
    <name evidence="1" type="primary">dapB</name>
    <name type="ordered locus">cauri_1517</name>
</gene>